<gene>
    <name type="primary">alr</name>
    <name type="ordered locus">VV2978</name>
</gene>
<organism>
    <name type="scientific">Vibrio vulnificus (strain YJ016)</name>
    <dbReference type="NCBI Taxonomy" id="196600"/>
    <lineage>
        <taxon>Bacteria</taxon>
        <taxon>Pseudomonadati</taxon>
        <taxon>Pseudomonadota</taxon>
        <taxon>Gammaproteobacteria</taxon>
        <taxon>Vibrionales</taxon>
        <taxon>Vibrionaceae</taxon>
        <taxon>Vibrio</taxon>
    </lineage>
</organism>
<sequence>MQARRLMMSNTMNYMKAATACIDLVALQHNLQLIKQQAPHSKLMAVVKANGYGHGLRHVAKHAVGADAFGVARIEEALQLRACGVVKPILLLEGFYSSGDLPVLVTNNIQTVVHCEEQLRDLENAELETPVVVWLKIDSGMHRLGVRPEQYQAFVERLHQCPNVAKPLRYMSHFGCADEMNNEMTPKQIELFLSLTRGCKGERSLAASAGLLAWQESQLEWVRPGIIMYGVSPFGDKTASELGYKPVMTLKSHLIAVRDVKAGESVGYGATWISERDTKVGVIAIGYGDGYPRTAPNGTPVLVNGRKVPIAGRVSMDMLTVDLGPDATDHVGDEAILWGADLPAEDVAQHIGTIAYELVTKLTSRVEMSYSE</sequence>
<accession>Q7MH94</accession>
<protein>
    <recommendedName>
        <fullName evidence="1">Alanine racemase</fullName>
        <ecNumber evidence="1">5.1.1.1</ecNumber>
    </recommendedName>
</protein>
<reference key="1">
    <citation type="journal article" date="2003" name="Genome Res.">
        <title>Comparative genome analysis of Vibrio vulnificus, a marine pathogen.</title>
        <authorList>
            <person name="Chen C.-Y."/>
            <person name="Wu K.-M."/>
            <person name="Chang Y.-C."/>
            <person name="Chang C.-H."/>
            <person name="Tsai H.-C."/>
            <person name="Liao T.-L."/>
            <person name="Liu Y.-M."/>
            <person name="Chen H.-J."/>
            <person name="Shen A.B.-T."/>
            <person name="Li J.-C."/>
            <person name="Su T.-L."/>
            <person name="Shao C.-P."/>
            <person name="Lee C.-T."/>
            <person name="Hor L.-I."/>
            <person name="Tsai S.-F."/>
        </authorList>
    </citation>
    <scope>NUCLEOTIDE SEQUENCE [LARGE SCALE GENOMIC DNA]</scope>
    <source>
        <strain>YJ016</strain>
    </source>
</reference>
<proteinExistence type="inferred from homology"/>
<keyword id="KW-0413">Isomerase</keyword>
<keyword id="KW-0663">Pyridoxal phosphate</keyword>
<comment type="function">
    <text evidence="1">Catalyzes the interconversion of L-alanine and D-alanine. May also act on other amino acids.</text>
</comment>
<comment type="catalytic activity">
    <reaction evidence="1">
        <text>L-alanine = D-alanine</text>
        <dbReference type="Rhea" id="RHEA:20249"/>
        <dbReference type="ChEBI" id="CHEBI:57416"/>
        <dbReference type="ChEBI" id="CHEBI:57972"/>
        <dbReference type="EC" id="5.1.1.1"/>
    </reaction>
</comment>
<comment type="cofactor">
    <cofactor evidence="1">
        <name>pyridoxal 5'-phosphate</name>
        <dbReference type="ChEBI" id="CHEBI:597326"/>
    </cofactor>
</comment>
<comment type="pathway">
    <text evidence="1">Amino-acid biosynthesis; D-alanine biosynthesis; D-alanine from L-alanine: step 1/1.</text>
</comment>
<comment type="similarity">
    <text evidence="1">Belongs to the alanine racemase family.</text>
</comment>
<dbReference type="EC" id="5.1.1.1" evidence="1"/>
<dbReference type="EMBL" id="BA000037">
    <property type="protein sequence ID" value="BAC95742.1"/>
    <property type="molecule type" value="Genomic_DNA"/>
</dbReference>
<dbReference type="RefSeq" id="WP_011151272.1">
    <property type="nucleotide sequence ID" value="NC_005139.1"/>
</dbReference>
<dbReference type="SMR" id="Q7MH94"/>
<dbReference type="STRING" id="672.VV93_v1c27070"/>
<dbReference type="KEGG" id="vvy:VV2978"/>
<dbReference type="eggNOG" id="COG0787">
    <property type="taxonomic scope" value="Bacteria"/>
</dbReference>
<dbReference type="HOGENOM" id="CLU_028393_1_0_6"/>
<dbReference type="UniPathway" id="UPA00042">
    <property type="reaction ID" value="UER00497"/>
</dbReference>
<dbReference type="Proteomes" id="UP000002675">
    <property type="component" value="Chromosome I"/>
</dbReference>
<dbReference type="GO" id="GO:0005829">
    <property type="term" value="C:cytosol"/>
    <property type="evidence" value="ECO:0007669"/>
    <property type="project" value="TreeGrafter"/>
</dbReference>
<dbReference type="GO" id="GO:0008784">
    <property type="term" value="F:alanine racemase activity"/>
    <property type="evidence" value="ECO:0007669"/>
    <property type="project" value="UniProtKB-UniRule"/>
</dbReference>
<dbReference type="GO" id="GO:0030170">
    <property type="term" value="F:pyridoxal phosphate binding"/>
    <property type="evidence" value="ECO:0007669"/>
    <property type="project" value="UniProtKB-UniRule"/>
</dbReference>
<dbReference type="GO" id="GO:0030632">
    <property type="term" value="P:D-alanine biosynthetic process"/>
    <property type="evidence" value="ECO:0007669"/>
    <property type="project" value="UniProtKB-UniRule"/>
</dbReference>
<dbReference type="CDD" id="cd06827">
    <property type="entry name" value="PLPDE_III_AR_proteobact"/>
    <property type="match status" value="1"/>
</dbReference>
<dbReference type="FunFam" id="2.40.37.10:FF:000002">
    <property type="entry name" value="Alanine racemase"/>
    <property type="match status" value="1"/>
</dbReference>
<dbReference type="FunFam" id="3.20.20.10:FF:000002">
    <property type="entry name" value="Alanine racemase"/>
    <property type="match status" value="1"/>
</dbReference>
<dbReference type="Gene3D" id="3.20.20.10">
    <property type="entry name" value="Alanine racemase"/>
    <property type="match status" value="1"/>
</dbReference>
<dbReference type="Gene3D" id="2.40.37.10">
    <property type="entry name" value="Lyase, Ornithine Decarboxylase, Chain A, domain 1"/>
    <property type="match status" value="1"/>
</dbReference>
<dbReference type="HAMAP" id="MF_01201">
    <property type="entry name" value="Ala_racemase"/>
    <property type="match status" value="1"/>
</dbReference>
<dbReference type="InterPro" id="IPR000821">
    <property type="entry name" value="Ala_racemase"/>
</dbReference>
<dbReference type="InterPro" id="IPR009006">
    <property type="entry name" value="Ala_racemase/Decarboxylase_C"/>
</dbReference>
<dbReference type="InterPro" id="IPR011079">
    <property type="entry name" value="Ala_racemase_C"/>
</dbReference>
<dbReference type="InterPro" id="IPR001608">
    <property type="entry name" value="Ala_racemase_N"/>
</dbReference>
<dbReference type="InterPro" id="IPR020622">
    <property type="entry name" value="Ala_racemase_pyridoxalP-BS"/>
</dbReference>
<dbReference type="InterPro" id="IPR029066">
    <property type="entry name" value="PLP-binding_barrel"/>
</dbReference>
<dbReference type="NCBIfam" id="TIGR00492">
    <property type="entry name" value="alr"/>
    <property type="match status" value="1"/>
</dbReference>
<dbReference type="PANTHER" id="PTHR30511">
    <property type="entry name" value="ALANINE RACEMASE"/>
    <property type="match status" value="1"/>
</dbReference>
<dbReference type="PANTHER" id="PTHR30511:SF4">
    <property type="entry name" value="ALANINE RACEMASE, BIOSYNTHETIC"/>
    <property type="match status" value="1"/>
</dbReference>
<dbReference type="Pfam" id="PF00842">
    <property type="entry name" value="Ala_racemase_C"/>
    <property type="match status" value="1"/>
</dbReference>
<dbReference type="Pfam" id="PF01168">
    <property type="entry name" value="Ala_racemase_N"/>
    <property type="match status" value="1"/>
</dbReference>
<dbReference type="PRINTS" id="PR00992">
    <property type="entry name" value="ALARACEMASE"/>
</dbReference>
<dbReference type="SMART" id="SM01005">
    <property type="entry name" value="Ala_racemase_C"/>
    <property type="match status" value="1"/>
</dbReference>
<dbReference type="SUPFAM" id="SSF50621">
    <property type="entry name" value="Alanine racemase C-terminal domain-like"/>
    <property type="match status" value="1"/>
</dbReference>
<dbReference type="SUPFAM" id="SSF51419">
    <property type="entry name" value="PLP-binding barrel"/>
    <property type="match status" value="1"/>
</dbReference>
<dbReference type="PROSITE" id="PS00395">
    <property type="entry name" value="ALANINE_RACEMASE"/>
    <property type="match status" value="1"/>
</dbReference>
<feature type="chain" id="PRO_1000066061" description="Alanine racemase">
    <location>
        <begin position="1"/>
        <end position="372"/>
    </location>
</feature>
<feature type="active site" description="Proton acceptor; specific for D-alanine" evidence="1">
    <location>
        <position position="48"/>
    </location>
</feature>
<feature type="active site" description="Proton acceptor; specific for L-alanine" evidence="1">
    <location>
        <position position="268"/>
    </location>
</feature>
<feature type="binding site" evidence="1">
    <location>
        <position position="143"/>
    </location>
    <ligand>
        <name>substrate</name>
    </ligand>
</feature>
<feature type="binding site" evidence="1">
    <location>
        <position position="316"/>
    </location>
    <ligand>
        <name>substrate</name>
    </ligand>
</feature>
<feature type="modified residue" description="N6-(pyridoxal phosphate)lysine" evidence="1">
    <location>
        <position position="48"/>
    </location>
</feature>
<name>ALR_VIBVY</name>
<evidence type="ECO:0000255" key="1">
    <source>
        <dbReference type="HAMAP-Rule" id="MF_01201"/>
    </source>
</evidence>